<reference key="1">
    <citation type="journal article" date="2003" name="Gene Expr. Patterns">
        <title>Developmentally regulated expression of two members of the Nrarp family in zebrafish.</title>
        <authorList>
            <person name="Topczewska J.M."/>
            <person name="Topczewski J."/>
            <person name="Szostak A."/>
            <person name="Solnica-Krezel L."/>
            <person name="Hogan B.L.M."/>
        </authorList>
    </citation>
    <scope>NUCLEOTIDE SEQUENCE [MRNA]</scope>
    <scope>DEVELOPMENTAL STAGE</scope>
</reference>
<reference key="2">
    <citation type="submission" date="2002-05" db="EMBL/GenBank/DDBJ databases">
        <title>Cloning and functional analysis of two zebrafish nrarp genes.</title>
        <authorList>
            <person name="Tang M."/>
            <person name="Jiang Y.J."/>
        </authorList>
    </citation>
    <scope>NUCLEOTIDE SEQUENCE [MRNA]</scope>
</reference>
<reference key="3">
    <citation type="submission" date="2004-11" db="EMBL/GenBank/DDBJ databases">
        <authorList>
            <consortium name="NIH - Zebrafish Gene Collection (ZGC) project"/>
        </authorList>
    </citation>
    <scope>NUCLEOTIDE SEQUENCE [LARGE SCALE MRNA]</scope>
    <source>
        <tissue>Larva</tissue>
    </source>
</reference>
<reference key="4">
    <citation type="journal article" date="2005" name="Nat. Cell Biol.">
        <title>Nrarp functions to modulate neural-crest-cell differentiation by regulating LEF1 protein stability.</title>
        <authorList>
            <person name="Ishitani T."/>
            <person name="Matsumoto K."/>
            <person name="Chitnis A.B."/>
            <person name="Itoh M."/>
        </authorList>
    </citation>
    <scope>FUNCTION</scope>
</reference>
<reference key="5">
    <citation type="journal article" date="2009" name="Dev. Cell">
        <title>Nrarp coordinates endothelial Notch and Wnt signaling to control vessel density in angiogenesis.</title>
        <authorList>
            <person name="Phng L.K."/>
            <person name="Potente M."/>
            <person name="Leslie J.D."/>
            <person name="Babbage J."/>
            <person name="Nyqvist D."/>
            <person name="Lobov I."/>
            <person name="Ondr J.K."/>
            <person name="Rao S."/>
            <person name="Lang R.A."/>
            <person name="Thurston G."/>
            <person name="Gerhardt H."/>
        </authorList>
    </citation>
    <scope>FUNCTION</scope>
</reference>
<keyword id="KW-0040">ANK repeat</keyword>
<keyword id="KW-0217">Developmental protein</keyword>
<keyword id="KW-0914">Notch signaling pathway</keyword>
<keyword id="KW-1185">Reference proteome</keyword>
<keyword id="KW-0677">Repeat</keyword>
<keyword id="KW-0804">Transcription</keyword>
<keyword id="KW-0805">Transcription regulation</keyword>
<gene>
    <name type="primary">nrarpb</name>
    <name type="ORF">zgc:101875</name>
</gene>
<accession>Q7T3X9</accession>
<organism>
    <name type="scientific">Danio rerio</name>
    <name type="common">Zebrafish</name>
    <name type="synonym">Brachydanio rerio</name>
    <dbReference type="NCBI Taxonomy" id="7955"/>
    <lineage>
        <taxon>Eukaryota</taxon>
        <taxon>Metazoa</taxon>
        <taxon>Chordata</taxon>
        <taxon>Craniata</taxon>
        <taxon>Vertebrata</taxon>
        <taxon>Euteleostomi</taxon>
        <taxon>Actinopterygii</taxon>
        <taxon>Neopterygii</taxon>
        <taxon>Teleostei</taxon>
        <taxon>Ostariophysi</taxon>
        <taxon>Cypriniformes</taxon>
        <taxon>Danionidae</taxon>
        <taxon>Danioninae</taxon>
        <taxon>Danio</taxon>
    </lineage>
</organism>
<name>NARPB_DANRE</name>
<proteinExistence type="evidence at transcript level"/>
<feature type="chain" id="PRO_0000325082" description="Notch-regulated ankyrin repeat-containing protein B">
    <location>
        <begin position="1"/>
        <end position="111"/>
    </location>
</feature>
<feature type="repeat" description="ANK 1">
    <location>
        <begin position="47"/>
        <end position="76"/>
    </location>
</feature>
<feature type="repeat" description="ANK 2">
    <location>
        <begin position="80"/>
        <end position="109"/>
    </location>
</feature>
<comment type="function">
    <text evidence="2 3">Regulates independently canonical Wnt and Notch signaling by modulating LEF1 and Notch protein turnover. Stabilizes LEF1, a pivotal transcription factor in the Wnt signaling cascade, by blocking its ubiquitination. Involved in angiogenesis; involved in intersegmental vessel patterning during development.</text>
</comment>
<comment type="developmental stage">
    <text evidence="1">First detected at low levels in the blastula stage and begins to accumulate in the margin of the blastoderm. At the shield stage, when gastrulation starts, expression is higher on the dorsal site. As gastrulation proceeds, expressed at high levels in the anterior ectoderm. In the 1 day old embryo, at the early pharyngula stage, expression in the developing brain is very strong and expression extends in to the spinal cord.</text>
</comment>
<comment type="similarity">
    <text evidence="4">Belongs to the NRARP family.</text>
</comment>
<sequence>MSQADMTCSARQRVFQEALRKGNTKELHSLLQNMTNCEFNVNSFGPEGQTALHQSVIDGNLELVKLLVKFGADTRLANRDGWSALHIAAFGGHQDIVLYLITRAKYSSSAL</sequence>
<evidence type="ECO:0000269" key="1">
    <source>
    </source>
</evidence>
<evidence type="ECO:0000269" key="2">
    <source>
    </source>
</evidence>
<evidence type="ECO:0000269" key="3">
    <source>
    </source>
</evidence>
<evidence type="ECO:0000305" key="4"/>
<protein>
    <recommendedName>
        <fullName>Notch-regulated ankyrin repeat-containing protein B</fullName>
    </recommendedName>
</protein>
<dbReference type="EMBL" id="AY187048">
    <property type="protein sequence ID" value="AAO83389.1"/>
    <property type="molecule type" value="mRNA"/>
</dbReference>
<dbReference type="EMBL" id="AF509781">
    <property type="protein sequence ID" value="AAQ08002.1"/>
    <property type="molecule type" value="mRNA"/>
</dbReference>
<dbReference type="EMBL" id="BC085461">
    <property type="protein sequence ID" value="AAH85461.1"/>
    <property type="molecule type" value="mRNA"/>
</dbReference>
<dbReference type="RefSeq" id="NP_852473.1">
    <property type="nucleotide sequence ID" value="NM_181496.5"/>
</dbReference>
<dbReference type="SMR" id="Q7T3X9"/>
<dbReference type="FunCoup" id="Q7T3X9">
    <property type="interactions" value="77"/>
</dbReference>
<dbReference type="STRING" id="7955.ENSDARP00000003601"/>
<dbReference type="PaxDb" id="7955-ENSDARP00000003601"/>
<dbReference type="Ensembl" id="ENSDART00000022625">
    <property type="protein sequence ID" value="ENSDARP00000003601"/>
    <property type="gene ID" value="ENSDARG00000018958"/>
</dbReference>
<dbReference type="Ensembl" id="ENSDART00000183012">
    <property type="protein sequence ID" value="ENSDARP00000148883"/>
    <property type="gene ID" value="ENSDARG00000018958"/>
</dbReference>
<dbReference type="GeneID" id="353225"/>
<dbReference type="KEGG" id="dre:353225"/>
<dbReference type="AGR" id="ZFIN:ZDB-GENE-030515-7"/>
<dbReference type="CTD" id="353225"/>
<dbReference type="ZFIN" id="ZDB-GENE-030515-7">
    <property type="gene designation" value="nrarpb"/>
</dbReference>
<dbReference type="eggNOG" id="KOG0505">
    <property type="taxonomic scope" value="Eukaryota"/>
</dbReference>
<dbReference type="InParanoid" id="Q7T3X9"/>
<dbReference type="OrthoDB" id="5314041at2759"/>
<dbReference type="PhylomeDB" id="Q7T3X9"/>
<dbReference type="PRO" id="PR:Q7T3X9"/>
<dbReference type="Proteomes" id="UP000000437">
    <property type="component" value="Chromosome 5"/>
</dbReference>
<dbReference type="Bgee" id="ENSDARG00000018958">
    <property type="expression patterns" value="Expressed in tail bud paraxial mesoderm and 28 other cell types or tissues"/>
</dbReference>
<dbReference type="ExpressionAtlas" id="Q7T3X9">
    <property type="expression patterns" value="baseline and differential"/>
</dbReference>
<dbReference type="GO" id="GO:0030941">
    <property type="term" value="F:chloroplast targeting sequence binding"/>
    <property type="evidence" value="ECO:0000318"/>
    <property type="project" value="GO_Central"/>
</dbReference>
<dbReference type="GO" id="GO:0002043">
    <property type="term" value="P:blood vessel endothelial cell proliferation involved in sprouting angiogenesis"/>
    <property type="evidence" value="ECO:0000315"/>
    <property type="project" value="ZFIN"/>
</dbReference>
<dbReference type="GO" id="GO:0001569">
    <property type="term" value="P:branching involved in blood vessel morphogenesis"/>
    <property type="evidence" value="ECO:0000315"/>
    <property type="project" value="MGI"/>
</dbReference>
<dbReference type="GO" id="GO:0007219">
    <property type="term" value="P:Notch signaling pathway"/>
    <property type="evidence" value="ECO:0007669"/>
    <property type="project" value="UniProtKB-KW"/>
</dbReference>
<dbReference type="GO" id="GO:0045036">
    <property type="term" value="P:protein targeting to chloroplast"/>
    <property type="evidence" value="ECO:0000318"/>
    <property type="project" value="GO_Central"/>
</dbReference>
<dbReference type="GO" id="GO:0022407">
    <property type="term" value="P:regulation of cell-cell adhesion"/>
    <property type="evidence" value="ECO:0000315"/>
    <property type="project" value="MGI"/>
</dbReference>
<dbReference type="GO" id="GO:0002040">
    <property type="term" value="P:sprouting angiogenesis"/>
    <property type="evidence" value="ECO:0000315"/>
    <property type="project" value="MGI"/>
</dbReference>
<dbReference type="FunFam" id="1.25.40.20:FF:000085">
    <property type="entry name" value="Notch-regulated ankyrin repeat-containing protein A"/>
    <property type="match status" value="1"/>
</dbReference>
<dbReference type="Gene3D" id="1.25.40.20">
    <property type="entry name" value="Ankyrin repeat-containing domain"/>
    <property type="match status" value="1"/>
</dbReference>
<dbReference type="InterPro" id="IPR002110">
    <property type="entry name" value="Ankyrin_rpt"/>
</dbReference>
<dbReference type="InterPro" id="IPR036770">
    <property type="entry name" value="Ankyrin_rpt-contain_sf"/>
</dbReference>
<dbReference type="InterPro" id="IPR051226">
    <property type="entry name" value="PP1_Regulatory_Subunit"/>
</dbReference>
<dbReference type="PANTHER" id="PTHR24179:SF21">
    <property type="entry name" value="MYOSIN BINDING SUBUNIT, ISOFORM O"/>
    <property type="match status" value="1"/>
</dbReference>
<dbReference type="PANTHER" id="PTHR24179">
    <property type="entry name" value="PROTEIN PHOSPHATASE 1 REGULATORY SUBUNIT 12"/>
    <property type="match status" value="1"/>
</dbReference>
<dbReference type="Pfam" id="PF12796">
    <property type="entry name" value="Ank_2"/>
    <property type="match status" value="1"/>
</dbReference>
<dbReference type="SMART" id="SM00248">
    <property type="entry name" value="ANK"/>
    <property type="match status" value="2"/>
</dbReference>
<dbReference type="SUPFAM" id="SSF48403">
    <property type="entry name" value="Ankyrin repeat"/>
    <property type="match status" value="1"/>
</dbReference>
<dbReference type="PROSITE" id="PS50297">
    <property type="entry name" value="ANK_REP_REGION"/>
    <property type="match status" value="1"/>
</dbReference>
<dbReference type="PROSITE" id="PS50088">
    <property type="entry name" value="ANK_REPEAT"/>
    <property type="match status" value="2"/>
</dbReference>